<name>RBFA_PROMH</name>
<accession>B4F2C0</accession>
<organism>
    <name type="scientific">Proteus mirabilis (strain HI4320)</name>
    <dbReference type="NCBI Taxonomy" id="529507"/>
    <lineage>
        <taxon>Bacteria</taxon>
        <taxon>Pseudomonadati</taxon>
        <taxon>Pseudomonadota</taxon>
        <taxon>Gammaproteobacteria</taxon>
        <taxon>Enterobacterales</taxon>
        <taxon>Morganellaceae</taxon>
        <taxon>Proteus</taxon>
    </lineage>
</organism>
<dbReference type="EMBL" id="AM942759">
    <property type="protein sequence ID" value="CAR46706.1"/>
    <property type="molecule type" value="Genomic_DNA"/>
</dbReference>
<dbReference type="RefSeq" id="WP_004246236.1">
    <property type="nucleotide sequence ID" value="NC_010554.1"/>
</dbReference>
<dbReference type="SMR" id="B4F2C0"/>
<dbReference type="EnsemblBacteria" id="CAR46706">
    <property type="protein sequence ID" value="CAR46706"/>
    <property type="gene ID" value="PMI3419"/>
</dbReference>
<dbReference type="GeneID" id="6803497"/>
<dbReference type="KEGG" id="pmr:PMI3419"/>
<dbReference type="eggNOG" id="COG0858">
    <property type="taxonomic scope" value="Bacteria"/>
</dbReference>
<dbReference type="HOGENOM" id="CLU_089475_5_0_6"/>
<dbReference type="Proteomes" id="UP000008319">
    <property type="component" value="Chromosome"/>
</dbReference>
<dbReference type="GO" id="GO:0005829">
    <property type="term" value="C:cytosol"/>
    <property type="evidence" value="ECO:0007669"/>
    <property type="project" value="TreeGrafter"/>
</dbReference>
<dbReference type="GO" id="GO:0043024">
    <property type="term" value="F:ribosomal small subunit binding"/>
    <property type="evidence" value="ECO:0007669"/>
    <property type="project" value="TreeGrafter"/>
</dbReference>
<dbReference type="GO" id="GO:0030490">
    <property type="term" value="P:maturation of SSU-rRNA"/>
    <property type="evidence" value="ECO:0007669"/>
    <property type="project" value="UniProtKB-UniRule"/>
</dbReference>
<dbReference type="FunFam" id="3.30.300.20:FF:000007">
    <property type="entry name" value="Ribosome-binding factor A"/>
    <property type="match status" value="1"/>
</dbReference>
<dbReference type="Gene3D" id="3.30.300.20">
    <property type="match status" value="1"/>
</dbReference>
<dbReference type="HAMAP" id="MF_00003">
    <property type="entry name" value="RbfA"/>
    <property type="match status" value="1"/>
</dbReference>
<dbReference type="InterPro" id="IPR015946">
    <property type="entry name" value="KH_dom-like_a/b"/>
</dbReference>
<dbReference type="InterPro" id="IPR000238">
    <property type="entry name" value="RbfA"/>
</dbReference>
<dbReference type="InterPro" id="IPR023799">
    <property type="entry name" value="RbfA_dom_sf"/>
</dbReference>
<dbReference type="InterPro" id="IPR020053">
    <property type="entry name" value="Ribosome-bd_factorA_CS"/>
</dbReference>
<dbReference type="NCBIfam" id="TIGR00082">
    <property type="entry name" value="rbfA"/>
    <property type="match status" value="1"/>
</dbReference>
<dbReference type="PANTHER" id="PTHR33515">
    <property type="entry name" value="RIBOSOME-BINDING FACTOR A, CHLOROPLASTIC-RELATED"/>
    <property type="match status" value="1"/>
</dbReference>
<dbReference type="PANTHER" id="PTHR33515:SF1">
    <property type="entry name" value="RIBOSOME-BINDING FACTOR A, CHLOROPLASTIC-RELATED"/>
    <property type="match status" value="1"/>
</dbReference>
<dbReference type="Pfam" id="PF02033">
    <property type="entry name" value="RBFA"/>
    <property type="match status" value="1"/>
</dbReference>
<dbReference type="SUPFAM" id="SSF89919">
    <property type="entry name" value="Ribosome-binding factor A, RbfA"/>
    <property type="match status" value="1"/>
</dbReference>
<dbReference type="PROSITE" id="PS01319">
    <property type="entry name" value="RBFA"/>
    <property type="match status" value="1"/>
</dbReference>
<proteinExistence type="inferred from homology"/>
<gene>
    <name evidence="1" type="primary">rbfA</name>
    <name type="ordered locus">PMI3419</name>
</gene>
<sequence length="133" mass="15050">MARDFSRAQRVSQEMQKEIAIILQREVKDPRIGMATVSGVEISRDLAYAKVFVTFLNLSAGEESDEEMVENGLKALNEAAGFIRSLLGKAMRLRVVPELTFAYDNSLVEGMRMSNLVSNVVKDDEKRRHKEEE</sequence>
<comment type="function">
    <text evidence="1">One of several proteins that assist in the late maturation steps of the functional core of the 30S ribosomal subunit. Associates with free 30S ribosomal subunits (but not with 30S subunits that are part of 70S ribosomes or polysomes). Required for efficient processing of 16S rRNA. May interact with the 5'-terminal helix region of 16S rRNA.</text>
</comment>
<comment type="subunit">
    <text evidence="1">Monomer. Binds 30S ribosomal subunits, but not 50S ribosomal subunits or 70S ribosomes.</text>
</comment>
<comment type="subcellular location">
    <subcellularLocation>
        <location evidence="1">Cytoplasm</location>
    </subcellularLocation>
</comment>
<comment type="similarity">
    <text evidence="1">Belongs to the RbfA family.</text>
</comment>
<protein>
    <recommendedName>
        <fullName evidence="1">Ribosome-binding factor A</fullName>
    </recommendedName>
</protein>
<reference key="1">
    <citation type="journal article" date="2008" name="J. Bacteriol.">
        <title>Complete genome sequence of uropathogenic Proteus mirabilis, a master of both adherence and motility.</title>
        <authorList>
            <person name="Pearson M.M."/>
            <person name="Sebaihia M."/>
            <person name="Churcher C."/>
            <person name="Quail M.A."/>
            <person name="Seshasayee A.S."/>
            <person name="Luscombe N.M."/>
            <person name="Abdellah Z."/>
            <person name="Arrosmith C."/>
            <person name="Atkin B."/>
            <person name="Chillingworth T."/>
            <person name="Hauser H."/>
            <person name="Jagels K."/>
            <person name="Moule S."/>
            <person name="Mungall K."/>
            <person name="Norbertczak H."/>
            <person name="Rabbinowitsch E."/>
            <person name="Walker D."/>
            <person name="Whithead S."/>
            <person name="Thomson N.R."/>
            <person name="Rather P.N."/>
            <person name="Parkhill J."/>
            <person name="Mobley H.L.T."/>
        </authorList>
    </citation>
    <scope>NUCLEOTIDE SEQUENCE [LARGE SCALE GENOMIC DNA]</scope>
    <source>
        <strain>HI4320</strain>
    </source>
</reference>
<feature type="chain" id="PRO_1000088917" description="Ribosome-binding factor A">
    <location>
        <begin position="1"/>
        <end position="133"/>
    </location>
</feature>
<keyword id="KW-0963">Cytoplasm</keyword>
<keyword id="KW-1185">Reference proteome</keyword>
<keyword id="KW-0690">Ribosome biogenesis</keyword>
<evidence type="ECO:0000255" key="1">
    <source>
        <dbReference type="HAMAP-Rule" id="MF_00003"/>
    </source>
</evidence>